<name>YQXC_BACSU</name>
<keyword id="KW-0489">Methyltransferase</keyword>
<keyword id="KW-1185">Reference proteome</keyword>
<keyword id="KW-0694">RNA-binding</keyword>
<keyword id="KW-0698">rRNA processing</keyword>
<keyword id="KW-0949">S-adenosyl-L-methionine</keyword>
<keyword id="KW-0808">Transferase</keyword>
<gene>
    <name type="primary">yqxC</name>
    <name type="synonym">yqiF</name>
    <name type="ordered locus">BSU24260</name>
</gene>
<accession>P19672</accession>
<organism>
    <name type="scientific">Bacillus subtilis (strain 168)</name>
    <dbReference type="NCBI Taxonomy" id="224308"/>
    <lineage>
        <taxon>Bacteria</taxon>
        <taxon>Bacillati</taxon>
        <taxon>Bacillota</taxon>
        <taxon>Bacilli</taxon>
        <taxon>Bacillales</taxon>
        <taxon>Bacillaceae</taxon>
        <taxon>Bacillus</taxon>
    </lineage>
</organism>
<evidence type="ECO:0000255" key="1">
    <source>
        <dbReference type="PROSITE-ProRule" id="PRU00182"/>
    </source>
</evidence>
<evidence type="ECO:0000305" key="2"/>
<reference key="1">
    <citation type="journal article" date="1996" name="Microbiology">
        <title>Systematic sequencing of the 283 kb 210 degrees-232 degrees region of the Bacillus subtilis genome containing the skin element and many sporulation genes.</title>
        <authorList>
            <person name="Mizuno M."/>
            <person name="Masuda S."/>
            <person name="Takemaru K."/>
            <person name="Hosono S."/>
            <person name="Sato T."/>
            <person name="Takeuchi M."/>
            <person name="Kobayashi Y."/>
        </authorList>
    </citation>
    <scope>NUCLEOTIDE SEQUENCE [GENOMIC DNA]</scope>
    <source>
        <strain>168 / JH642</strain>
    </source>
</reference>
<reference key="2">
    <citation type="journal article" date="1997" name="Nature">
        <title>The complete genome sequence of the Gram-positive bacterium Bacillus subtilis.</title>
        <authorList>
            <person name="Kunst F."/>
            <person name="Ogasawara N."/>
            <person name="Moszer I."/>
            <person name="Albertini A.M."/>
            <person name="Alloni G."/>
            <person name="Azevedo V."/>
            <person name="Bertero M.G."/>
            <person name="Bessieres P."/>
            <person name="Bolotin A."/>
            <person name="Borchert S."/>
            <person name="Borriss R."/>
            <person name="Boursier L."/>
            <person name="Brans A."/>
            <person name="Braun M."/>
            <person name="Brignell S.C."/>
            <person name="Bron S."/>
            <person name="Brouillet S."/>
            <person name="Bruschi C.V."/>
            <person name="Caldwell B."/>
            <person name="Capuano V."/>
            <person name="Carter N.M."/>
            <person name="Choi S.-K."/>
            <person name="Codani J.-J."/>
            <person name="Connerton I.F."/>
            <person name="Cummings N.J."/>
            <person name="Daniel R.A."/>
            <person name="Denizot F."/>
            <person name="Devine K.M."/>
            <person name="Duesterhoeft A."/>
            <person name="Ehrlich S.D."/>
            <person name="Emmerson P.T."/>
            <person name="Entian K.-D."/>
            <person name="Errington J."/>
            <person name="Fabret C."/>
            <person name="Ferrari E."/>
            <person name="Foulger D."/>
            <person name="Fritz C."/>
            <person name="Fujita M."/>
            <person name="Fujita Y."/>
            <person name="Fuma S."/>
            <person name="Galizzi A."/>
            <person name="Galleron N."/>
            <person name="Ghim S.-Y."/>
            <person name="Glaser P."/>
            <person name="Goffeau A."/>
            <person name="Golightly E.J."/>
            <person name="Grandi G."/>
            <person name="Guiseppi G."/>
            <person name="Guy B.J."/>
            <person name="Haga K."/>
            <person name="Haiech J."/>
            <person name="Harwood C.R."/>
            <person name="Henaut A."/>
            <person name="Hilbert H."/>
            <person name="Holsappel S."/>
            <person name="Hosono S."/>
            <person name="Hullo M.-F."/>
            <person name="Itaya M."/>
            <person name="Jones L.-M."/>
            <person name="Joris B."/>
            <person name="Karamata D."/>
            <person name="Kasahara Y."/>
            <person name="Klaerr-Blanchard M."/>
            <person name="Klein C."/>
            <person name="Kobayashi Y."/>
            <person name="Koetter P."/>
            <person name="Koningstein G."/>
            <person name="Krogh S."/>
            <person name="Kumano M."/>
            <person name="Kurita K."/>
            <person name="Lapidus A."/>
            <person name="Lardinois S."/>
            <person name="Lauber J."/>
            <person name="Lazarevic V."/>
            <person name="Lee S.-M."/>
            <person name="Levine A."/>
            <person name="Liu H."/>
            <person name="Masuda S."/>
            <person name="Mauel C."/>
            <person name="Medigue C."/>
            <person name="Medina N."/>
            <person name="Mellado R.P."/>
            <person name="Mizuno M."/>
            <person name="Moestl D."/>
            <person name="Nakai S."/>
            <person name="Noback M."/>
            <person name="Noone D."/>
            <person name="O'Reilly M."/>
            <person name="Ogawa K."/>
            <person name="Ogiwara A."/>
            <person name="Oudega B."/>
            <person name="Park S.-H."/>
            <person name="Parro V."/>
            <person name="Pohl T.M."/>
            <person name="Portetelle D."/>
            <person name="Porwollik S."/>
            <person name="Prescott A.M."/>
            <person name="Presecan E."/>
            <person name="Pujic P."/>
            <person name="Purnelle B."/>
            <person name="Rapoport G."/>
            <person name="Rey M."/>
            <person name="Reynolds S."/>
            <person name="Rieger M."/>
            <person name="Rivolta C."/>
            <person name="Rocha E."/>
            <person name="Roche B."/>
            <person name="Rose M."/>
            <person name="Sadaie Y."/>
            <person name="Sato T."/>
            <person name="Scanlan E."/>
            <person name="Schleich S."/>
            <person name="Schroeter R."/>
            <person name="Scoffone F."/>
            <person name="Sekiguchi J."/>
            <person name="Sekowska A."/>
            <person name="Seror S.J."/>
            <person name="Serror P."/>
            <person name="Shin B.-S."/>
            <person name="Soldo B."/>
            <person name="Sorokin A."/>
            <person name="Tacconi E."/>
            <person name="Takagi T."/>
            <person name="Takahashi H."/>
            <person name="Takemaru K."/>
            <person name="Takeuchi M."/>
            <person name="Tamakoshi A."/>
            <person name="Tanaka T."/>
            <person name="Terpstra P."/>
            <person name="Tognoni A."/>
            <person name="Tosato V."/>
            <person name="Uchiyama S."/>
            <person name="Vandenbol M."/>
            <person name="Vannier F."/>
            <person name="Vassarotti A."/>
            <person name="Viari A."/>
            <person name="Wambutt R."/>
            <person name="Wedler E."/>
            <person name="Wedler H."/>
            <person name="Weitzenegger T."/>
            <person name="Winters P."/>
            <person name="Wipat A."/>
            <person name="Yamamoto H."/>
            <person name="Yamane K."/>
            <person name="Yasumoto K."/>
            <person name="Yata K."/>
            <person name="Yoshida K."/>
            <person name="Yoshikawa H.-F."/>
            <person name="Zumstein E."/>
            <person name="Yoshikawa H."/>
            <person name="Danchin A."/>
        </authorList>
    </citation>
    <scope>NUCLEOTIDE SEQUENCE [LARGE SCALE GENOMIC DNA]</scope>
    <source>
        <strain>168</strain>
    </source>
</reference>
<reference key="3">
    <citation type="journal article" date="2009" name="Microbiology">
        <title>From a consortium sequence to a unified sequence: the Bacillus subtilis 168 reference genome a decade later.</title>
        <authorList>
            <person name="Barbe V."/>
            <person name="Cruveiller S."/>
            <person name="Kunst F."/>
            <person name="Lenoble P."/>
            <person name="Meurice G."/>
            <person name="Sekowska A."/>
            <person name="Vallenet D."/>
            <person name="Wang T."/>
            <person name="Moszer I."/>
            <person name="Medigue C."/>
            <person name="Danchin A."/>
        </authorList>
    </citation>
    <scope>SEQUENCE REVISION TO C-TERMINUS</scope>
</reference>
<reference key="4">
    <citation type="journal article" date="1989" name="Gene">
        <title>Nucleotide sequence of a Bacillus subtilis arginine regulatory gene and homology of its product to the Escherichia coli arginine repressor.</title>
        <authorList>
            <person name="North A.K."/>
            <person name="Smith M.C.M."/>
            <person name="Baumberg S."/>
        </authorList>
    </citation>
    <scope>NUCLEOTIDE SEQUENCE [GENOMIC DNA] OF 205-281</scope>
    <source>
        <strain>168 / EMG50</strain>
    </source>
</reference>
<protein>
    <recommendedName>
        <fullName>Putative rRNA methyltransferase YqxC</fullName>
        <ecNumber>2.1.1.-</ecNumber>
    </recommendedName>
</protein>
<feature type="chain" id="PRO_0000049845" description="Putative rRNA methyltransferase YqxC">
    <location>
        <begin position="1"/>
        <end position="281"/>
    </location>
</feature>
<feature type="domain" description="S4 RNA-binding" evidence="1">
    <location>
        <begin position="6"/>
        <end position="67"/>
    </location>
</feature>
<feature type="sequence conflict" description="In Ref. 4; AAA22207." evidence="2" ref="4">
    <original>HADVLK</original>
    <variation>CMLIAQ</variation>
    <location>
        <begin position="205"/>
        <end position="210"/>
    </location>
</feature>
<feature type="sequence conflict" description="In Ref. 1; BAA12577 and 4; AAA22207." evidence="2" ref="1 4">
    <original>HLHWPGEGQEGQELPEEEIMRVVEEAHKTLKEKKADVPE</original>
    <variation>QFALAGRGTGRPGTAGRRDHARCRRST</variation>
    <location>
        <begin position="243"/>
        <end position="281"/>
    </location>
</feature>
<sequence>MTSKKERLDVLLVERGLAETREKAKRAIMAGIVYSNENRLDKPGEKIDRDLPLTVKGNPLRYVSRGGLKLEKALKEFPVSVKDKIMIDIGSSTGGFTDCALQNGAKQSYAVDVGYNQLAWKLRQDERVVVMERTNFRYATPADFTKGMPEFATIDVSFISLRLILPVLRTLLVPGSDCMALVKPQFEAGRESVGKKGIVRDPKVHADVLKRMISFSAAEGYICKGLSFSPITGGDGNIEFLLHLHWPGEGQEGQELPEEEIMRVVEEAHKTLKEKKADVPE</sequence>
<proteinExistence type="inferred from homology"/>
<dbReference type="EC" id="2.1.1.-"/>
<dbReference type="EMBL" id="D84432">
    <property type="protein sequence ID" value="BAA12577.1"/>
    <property type="molecule type" value="Genomic_DNA"/>
</dbReference>
<dbReference type="EMBL" id="AL009126">
    <property type="protein sequence ID" value="CAB14357.2"/>
    <property type="molecule type" value="Genomic_DNA"/>
</dbReference>
<dbReference type="EMBL" id="M27869">
    <property type="protein sequence ID" value="AAA22207.1"/>
    <property type="molecule type" value="Genomic_DNA"/>
</dbReference>
<dbReference type="PIR" id="G69967">
    <property type="entry name" value="G69967"/>
</dbReference>
<dbReference type="RefSeq" id="NP_390306.2">
    <property type="nucleotide sequence ID" value="NC_000964.3"/>
</dbReference>
<dbReference type="RefSeq" id="WP_003230264.1">
    <property type="nucleotide sequence ID" value="NZ_OZ025638.1"/>
</dbReference>
<dbReference type="SMR" id="P19672"/>
<dbReference type="FunCoup" id="P19672">
    <property type="interactions" value="319"/>
</dbReference>
<dbReference type="STRING" id="224308.BSU24260"/>
<dbReference type="PaxDb" id="224308-BSU24260"/>
<dbReference type="EnsemblBacteria" id="CAB14357">
    <property type="protein sequence ID" value="CAB14357"/>
    <property type="gene ID" value="BSU_24260"/>
</dbReference>
<dbReference type="GeneID" id="938651"/>
<dbReference type="KEGG" id="bsu:BSU24260"/>
<dbReference type="PATRIC" id="fig|224308.179.peg.2644"/>
<dbReference type="eggNOG" id="COG1189">
    <property type="taxonomic scope" value="Bacteria"/>
</dbReference>
<dbReference type="InParanoid" id="P19672"/>
<dbReference type="OrthoDB" id="9784736at2"/>
<dbReference type="PhylomeDB" id="P19672"/>
<dbReference type="BioCyc" id="BSUB:BSU24260-MONOMER"/>
<dbReference type="Proteomes" id="UP000001570">
    <property type="component" value="Chromosome"/>
</dbReference>
<dbReference type="GO" id="GO:0008168">
    <property type="term" value="F:methyltransferase activity"/>
    <property type="evidence" value="ECO:0007669"/>
    <property type="project" value="UniProtKB-KW"/>
</dbReference>
<dbReference type="GO" id="GO:0003723">
    <property type="term" value="F:RNA binding"/>
    <property type="evidence" value="ECO:0007669"/>
    <property type="project" value="UniProtKB-KW"/>
</dbReference>
<dbReference type="GO" id="GO:0032259">
    <property type="term" value="P:methylation"/>
    <property type="evidence" value="ECO:0007669"/>
    <property type="project" value="UniProtKB-KW"/>
</dbReference>
<dbReference type="GO" id="GO:0006364">
    <property type="term" value="P:rRNA processing"/>
    <property type="evidence" value="ECO:0007669"/>
    <property type="project" value="UniProtKB-KW"/>
</dbReference>
<dbReference type="CDD" id="cd00165">
    <property type="entry name" value="S4"/>
    <property type="match status" value="1"/>
</dbReference>
<dbReference type="Gene3D" id="3.10.290.10">
    <property type="entry name" value="RNA-binding S4 domain"/>
    <property type="match status" value="1"/>
</dbReference>
<dbReference type="Gene3D" id="3.40.50.150">
    <property type="entry name" value="Vaccinia Virus protein VP39"/>
    <property type="match status" value="1"/>
</dbReference>
<dbReference type="InterPro" id="IPR004538">
    <property type="entry name" value="Hemolysin_A/TlyA"/>
</dbReference>
<dbReference type="InterPro" id="IPR002877">
    <property type="entry name" value="RNA_MeTrfase_FtsJ_dom"/>
</dbReference>
<dbReference type="InterPro" id="IPR002942">
    <property type="entry name" value="S4_RNA-bd"/>
</dbReference>
<dbReference type="InterPro" id="IPR036986">
    <property type="entry name" value="S4_RNA-bd_sf"/>
</dbReference>
<dbReference type="InterPro" id="IPR029063">
    <property type="entry name" value="SAM-dependent_MTases_sf"/>
</dbReference>
<dbReference type="InterPro" id="IPR047048">
    <property type="entry name" value="TlyA"/>
</dbReference>
<dbReference type="NCBIfam" id="TIGR00478">
    <property type="entry name" value="tly"/>
    <property type="match status" value="1"/>
</dbReference>
<dbReference type="PANTHER" id="PTHR32319">
    <property type="entry name" value="BACTERIAL HEMOLYSIN-LIKE PROTEIN"/>
    <property type="match status" value="1"/>
</dbReference>
<dbReference type="PANTHER" id="PTHR32319:SF0">
    <property type="entry name" value="BACTERIAL HEMOLYSIN-LIKE PROTEIN"/>
    <property type="match status" value="1"/>
</dbReference>
<dbReference type="Pfam" id="PF01728">
    <property type="entry name" value="FtsJ"/>
    <property type="match status" value="1"/>
</dbReference>
<dbReference type="Pfam" id="PF01479">
    <property type="entry name" value="S4"/>
    <property type="match status" value="1"/>
</dbReference>
<dbReference type="PIRSF" id="PIRSF005578">
    <property type="entry name" value="TlyA"/>
    <property type="match status" value="1"/>
</dbReference>
<dbReference type="SMART" id="SM00363">
    <property type="entry name" value="S4"/>
    <property type="match status" value="1"/>
</dbReference>
<dbReference type="SUPFAM" id="SSF55174">
    <property type="entry name" value="Alpha-L RNA-binding motif"/>
    <property type="match status" value="1"/>
</dbReference>
<dbReference type="SUPFAM" id="SSF53335">
    <property type="entry name" value="S-adenosyl-L-methionine-dependent methyltransferases"/>
    <property type="match status" value="1"/>
</dbReference>
<dbReference type="PROSITE" id="PS50889">
    <property type="entry name" value="S4"/>
    <property type="match status" value="1"/>
</dbReference>
<comment type="similarity">
    <text evidence="2">Belongs to the TlyA family.</text>
</comment>